<evidence type="ECO:0000255" key="1">
    <source>
        <dbReference type="HAMAP-Rule" id="MF_02102"/>
    </source>
</evidence>
<gene>
    <name evidence="1" type="primary">ptcA</name>
    <name type="ordered locus">LCA_0067</name>
</gene>
<proteinExistence type="inferred from homology"/>
<comment type="function">
    <text evidence="1">Catalyzes the phosphorolysis of N-carbamoylputrescine to form carbamoyl phosphate and putrescine. Is involved in the degradation pathway of the polyamine agmatine.</text>
</comment>
<comment type="catalytic activity">
    <reaction evidence="1">
        <text>carbamoyl phosphate + putrescine = N-carbamoylputrescine + phosphate + H(+)</text>
        <dbReference type="Rhea" id="RHEA:21936"/>
        <dbReference type="ChEBI" id="CHEBI:15378"/>
        <dbReference type="ChEBI" id="CHEBI:43474"/>
        <dbReference type="ChEBI" id="CHEBI:58228"/>
        <dbReference type="ChEBI" id="CHEBI:58318"/>
        <dbReference type="ChEBI" id="CHEBI:326268"/>
        <dbReference type="EC" id="2.1.3.6"/>
    </reaction>
</comment>
<comment type="pathway">
    <text evidence="1">Amine and polyamine biosynthesis; putrescine biosynthesis via agmatine pathway; putrescine from N-carbamoylputrescine (transferase route): step 1/1.</text>
</comment>
<comment type="subunit">
    <text evidence="1">Homotrimer.</text>
</comment>
<comment type="subcellular location">
    <subcellularLocation>
        <location evidence="1">Cytoplasm</location>
    </subcellularLocation>
</comment>
<comment type="similarity">
    <text evidence="1">Belongs to the aspartate/ornithine carbamoyltransferase superfamily. PTCase family.</text>
</comment>
<organism>
    <name type="scientific">Latilactobacillus sakei subsp. sakei (strain 23K)</name>
    <name type="common">Lactobacillus sakei subsp. sakei</name>
    <dbReference type="NCBI Taxonomy" id="314315"/>
    <lineage>
        <taxon>Bacteria</taxon>
        <taxon>Bacillati</taxon>
        <taxon>Bacillota</taxon>
        <taxon>Bacilli</taxon>
        <taxon>Lactobacillales</taxon>
        <taxon>Lactobacillaceae</taxon>
        <taxon>Latilactobacillus</taxon>
    </lineage>
</organism>
<reference key="1">
    <citation type="journal article" date="2005" name="Nat. Biotechnol.">
        <title>The complete genome sequence of the meat-borne lactic acid bacterium Lactobacillus sakei 23K.</title>
        <authorList>
            <person name="Chaillou S."/>
            <person name="Champomier-Verges M.-C."/>
            <person name="Cornet M."/>
            <person name="Crutz-Le Coq A.-M."/>
            <person name="Dudez A.-M."/>
            <person name="Martin V."/>
            <person name="Beaufils S."/>
            <person name="Darbon-Rongere E."/>
            <person name="Bossy R."/>
            <person name="Loux V."/>
            <person name="Zagorec M."/>
        </authorList>
    </citation>
    <scope>NUCLEOTIDE SEQUENCE [LARGE SCALE GENOMIC DNA]</scope>
    <source>
        <strain>23K</strain>
    </source>
</reference>
<accession>Q38ZL1</accession>
<name>PTC_LATSS</name>
<protein>
    <recommendedName>
        <fullName evidence="1">Putrescine carbamoyltransferase</fullName>
        <shortName evidence="1">PTC</shortName>
        <shortName evidence="1">PTCase</shortName>
        <ecNumber evidence="1">2.1.3.6</ecNumber>
    </recommendedName>
    <alternativeName>
        <fullName evidence="1">Putrescine transcarbamoylase</fullName>
    </alternativeName>
    <alternativeName>
        <fullName evidence="1">Putrescine transcarbamylase</fullName>
    </alternativeName>
</protein>
<keyword id="KW-0963">Cytoplasm</keyword>
<keyword id="KW-0620">Polyamine biosynthesis</keyword>
<keyword id="KW-1185">Reference proteome</keyword>
<keyword id="KW-0808">Transferase</keyword>
<sequence>MKRDFIDTKDYTQAEIQYLIDLGLQIKKDIKAGDYPQLLSNRTLGMLFEESSTRTRVSFETAMTQLGGHAQYLAPGQIHLGSAESESLGDTAIVLSRLVDILMARVATHDTIETIANAATVPVLNGMTDYNHPTQEIGDIITMAEHLPAGKKLSDCKVVFVGDATQVCVSLMFVATKMGMQFVQYGPKGYQIKPETLAIGQKNAEVSGGSVLITEDTDQAMRDADFVYTDVWYGLYESPLSYDERMAIFYPKYQVNDELMAKAAKHAKFMHCLPANRGEEVTDSVLDSDASVAWDEAENRLTAMRALLVYLMAPIIDYSDDTLNNLKDPALKDLLNNRIDSTK</sequence>
<dbReference type="EC" id="2.1.3.6" evidence="1"/>
<dbReference type="EMBL" id="CR936503">
    <property type="protein sequence ID" value="CAI54366.1"/>
    <property type="molecule type" value="Genomic_DNA"/>
</dbReference>
<dbReference type="RefSeq" id="WP_011373781.1">
    <property type="nucleotide sequence ID" value="NC_007576.1"/>
</dbReference>
<dbReference type="SMR" id="Q38ZL1"/>
<dbReference type="STRING" id="314315.LCA_0067"/>
<dbReference type="KEGG" id="lsa:LCA_0067"/>
<dbReference type="eggNOG" id="COG0078">
    <property type="taxonomic scope" value="Bacteria"/>
</dbReference>
<dbReference type="HOGENOM" id="CLU_043846_3_1_9"/>
<dbReference type="OrthoDB" id="9802587at2"/>
<dbReference type="UniPathway" id="UPA00534">
    <property type="reaction ID" value="UER00941"/>
</dbReference>
<dbReference type="Proteomes" id="UP000002707">
    <property type="component" value="Chromosome"/>
</dbReference>
<dbReference type="GO" id="GO:0005737">
    <property type="term" value="C:cytoplasm"/>
    <property type="evidence" value="ECO:0007669"/>
    <property type="project" value="UniProtKB-SubCell"/>
</dbReference>
<dbReference type="GO" id="GO:0016597">
    <property type="term" value="F:amino acid binding"/>
    <property type="evidence" value="ECO:0007669"/>
    <property type="project" value="InterPro"/>
</dbReference>
<dbReference type="GO" id="GO:0004585">
    <property type="term" value="F:ornithine carbamoyltransferase activity"/>
    <property type="evidence" value="ECO:0007669"/>
    <property type="project" value="UniProtKB-ARBA"/>
</dbReference>
<dbReference type="GO" id="GO:0050231">
    <property type="term" value="F:putrescine carbamoyltransferase activity"/>
    <property type="evidence" value="ECO:0007669"/>
    <property type="project" value="UniProtKB-UniRule"/>
</dbReference>
<dbReference type="GO" id="GO:0042450">
    <property type="term" value="P:arginine biosynthetic process via ornithine"/>
    <property type="evidence" value="ECO:0007669"/>
    <property type="project" value="TreeGrafter"/>
</dbReference>
<dbReference type="GO" id="GO:0019240">
    <property type="term" value="P:citrulline biosynthetic process"/>
    <property type="evidence" value="ECO:0007669"/>
    <property type="project" value="TreeGrafter"/>
</dbReference>
<dbReference type="GO" id="GO:0033390">
    <property type="term" value="P:putrescine biosynthetic process from arginine via N-carbamoylputrescine"/>
    <property type="evidence" value="ECO:0007669"/>
    <property type="project" value="UniProtKB-UniRule"/>
</dbReference>
<dbReference type="FunFam" id="3.40.50.1370:FF:000008">
    <property type="entry name" value="Ornithine carbamoyltransferase"/>
    <property type="match status" value="1"/>
</dbReference>
<dbReference type="Gene3D" id="3.40.50.1370">
    <property type="entry name" value="Aspartate/ornithine carbamoyltransferase"/>
    <property type="match status" value="2"/>
</dbReference>
<dbReference type="HAMAP" id="MF_02102">
    <property type="entry name" value="PTCase"/>
    <property type="match status" value="1"/>
</dbReference>
<dbReference type="InterPro" id="IPR006132">
    <property type="entry name" value="Asp/Orn_carbamoyltranf_P-bd"/>
</dbReference>
<dbReference type="InterPro" id="IPR006130">
    <property type="entry name" value="Asp/Orn_carbamoylTrfase"/>
</dbReference>
<dbReference type="InterPro" id="IPR036901">
    <property type="entry name" value="Asp/Orn_carbamoylTrfase_sf"/>
</dbReference>
<dbReference type="InterPro" id="IPR006131">
    <property type="entry name" value="Asp_carbamoyltransf_Asp/Orn-bd"/>
</dbReference>
<dbReference type="InterPro" id="IPR002292">
    <property type="entry name" value="Orn/put_carbamltrans"/>
</dbReference>
<dbReference type="InterPro" id="IPR024903">
    <property type="entry name" value="PtcA"/>
</dbReference>
<dbReference type="NCBIfam" id="TIGR00658">
    <property type="entry name" value="orni_carb_tr"/>
    <property type="match status" value="1"/>
</dbReference>
<dbReference type="NCBIfam" id="NF001986">
    <property type="entry name" value="PRK00779.1"/>
    <property type="match status" value="1"/>
</dbReference>
<dbReference type="NCBIfam" id="TIGR04384">
    <property type="entry name" value="putr_carbamoyl"/>
    <property type="match status" value="1"/>
</dbReference>
<dbReference type="PANTHER" id="PTHR45753">
    <property type="entry name" value="ORNITHINE CARBAMOYLTRANSFERASE, MITOCHONDRIAL"/>
    <property type="match status" value="1"/>
</dbReference>
<dbReference type="PANTHER" id="PTHR45753:SF3">
    <property type="entry name" value="ORNITHINE TRANSCARBAMYLASE, MITOCHONDRIAL"/>
    <property type="match status" value="1"/>
</dbReference>
<dbReference type="Pfam" id="PF00185">
    <property type="entry name" value="OTCace"/>
    <property type="match status" value="1"/>
</dbReference>
<dbReference type="Pfam" id="PF02729">
    <property type="entry name" value="OTCace_N"/>
    <property type="match status" value="1"/>
</dbReference>
<dbReference type="PRINTS" id="PR00100">
    <property type="entry name" value="AOTCASE"/>
</dbReference>
<dbReference type="PRINTS" id="PR00102">
    <property type="entry name" value="OTCASE"/>
</dbReference>
<dbReference type="SUPFAM" id="SSF53671">
    <property type="entry name" value="Aspartate/ornithine carbamoyltransferase"/>
    <property type="match status" value="1"/>
</dbReference>
<dbReference type="PROSITE" id="PS00097">
    <property type="entry name" value="CARBAMOYLTRANSFERASE"/>
    <property type="match status" value="1"/>
</dbReference>
<feature type="chain" id="PRO_0000380720" description="Putrescine carbamoyltransferase">
    <location>
        <begin position="1"/>
        <end position="343"/>
    </location>
</feature>
<feature type="binding site" evidence="1">
    <location>
        <begin position="52"/>
        <end position="56"/>
    </location>
    <ligand>
        <name>carbamoyl phosphate</name>
        <dbReference type="ChEBI" id="CHEBI:58228"/>
    </ligand>
</feature>
<feature type="binding site" evidence="1">
    <location>
        <position position="105"/>
    </location>
    <ligand>
        <name>carbamoyl phosphate</name>
        <dbReference type="ChEBI" id="CHEBI:58228"/>
    </ligand>
</feature>
<feature type="binding site" evidence="1">
    <location>
        <position position="132"/>
    </location>
    <ligand>
        <name>carbamoyl phosphate</name>
        <dbReference type="ChEBI" id="CHEBI:58228"/>
    </ligand>
</feature>
<feature type="binding site" evidence="1">
    <location>
        <begin position="271"/>
        <end position="274"/>
    </location>
    <ligand>
        <name>putrescine</name>
        <dbReference type="ChEBI" id="CHEBI:326268"/>
    </ligand>
</feature>
<feature type="site" description="Important for structural integrity" evidence="1">
    <location>
        <position position="27"/>
    </location>
</feature>
<feature type="site" description="Important for structural integrity" evidence="1">
    <location>
        <position position="145"/>
    </location>
</feature>